<feature type="chain" id="PRO_0000258242" description="Large ribosomal subunit protein uL11">
    <location>
        <begin position="1"/>
        <end position="142"/>
    </location>
</feature>
<accession>Q2NZX4</accession>
<evidence type="ECO:0000255" key="1">
    <source>
        <dbReference type="HAMAP-Rule" id="MF_00736"/>
    </source>
</evidence>
<evidence type="ECO:0000305" key="2"/>
<organism>
    <name type="scientific">Xanthomonas oryzae pv. oryzae (strain MAFF 311018)</name>
    <dbReference type="NCBI Taxonomy" id="342109"/>
    <lineage>
        <taxon>Bacteria</taxon>
        <taxon>Pseudomonadati</taxon>
        <taxon>Pseudomonadota</taxon>
        <taxon>Gammaproteobacteria</taxon>
        <taxon>Lysobacterales</taxon>
        <taxon>Lysobacteraceae</taxon>
        <taxon>Xanthomonas</taxon>
    </lineage>
</organism>
<gene>
    <name evidence="1" type="primary">rplK</name>
    <name type="ordered locus">XOO3398</name>
</gene>
<comment type="function">
    <text evidence="1">Forms part of the ribosomal stalk which helps the ribosome interact with GTP-bound translation factors.</text>
</comment>
<comment type="subunit">
    <text evidence="1">Part of the ribosomal stalk of the 50S ribosomal subunit. Interacts with L10 and the large rRNA to form the base of the stalk. L10 forms an elongated spine to which L12 dimers bind in a sequential fashion forming a multimeric L10(L12)X complex.</text>
</comment>
<comment type="PTM">
    <text evidence="1">One or more lysine residues are methylated.</text>
</comment>
<comment type="similarity">
    <text evidence="1">Belongs to the universal ribosomal protein uL11 family.</text>
</comment>
<name>RL11_XANOM</name>
<protein>
    <recommendedName>
        <fullName evidence="1">Large ribosomal subunit protein uL11</fullName>
    </recommendedName>
    <alternativeName>
        <fullName evidence="2">50S ribosomal protein L11</fullName>
    </alternativeName>
</protein>
<reference key="1">
    <citation type="journal article" date="2005" name="Jpn. Agric. Res. Q.">
        <title>Genome sequence of Xanthomonas oryzae pv. oryzae suggests contribution of large numbers of effector genes and insertion sequences to its race diversity.</title>
        <authorList>
            <person name="Ochiai H."/>
            <person name="Inoue Y."/>
            <person name="Takeya M."/>
            <person name="Sasaki A."/>
            <person name="Kaku H."/>
        </authorList>
    </citation>
    <scope>NUCLEOTIDE SEQUENCE [LARGE SCALE GENOMIC DNA]</scope>
    <source>
        <strain>MAFF 311018</strain>
    </source>
</reference>
<sequence>MARKINCYIKLQVKAGQANPAPPVGPALGQRGLNIMEFCKAFNAATSKLEPGLPTPVIITAYSDRTFTFVTKSTPASVLLKKAAGVTSGSKRPNTDKVGKVTRKQLEEIVKVKEADLTAADLEAAVRTIAGSARSMGLTVEG</sequence>
<dbReference type="EMBL" id="AP008229">
    <property type="protein sequence ID" value="BAE70153.1"/>
    <property type="molecule type" value="Genomic_DNA"/>
</dbReference>
<dbReference type="RefSeq" id="WP_011260038.1">
    <property type="nucleotide sequence ID" value="NC_007705.1"/>
</dbReference>
<dbReference type="SMR" id="Q2NZX4"/>
<dbReference type="KEGG" id="xom:XOO3398"/>
<dbReference type="HOGENOM" id="CLU_074237_2_0_6"/>
<dbReference type="GO" id="GO:0022625">
    <property type="term" value="C:cytosolic large ribosomal subunit"/>
    <property type="evidence" value="ECO:0007669"/>
    <property type="project" value="TreeGrafter"/>
</dbReference>
<dbReference type="GO" id="GO:0070180">
    <property type="term" value="F:large ribosomal subunit rRNA binding"/>
    <property type="evidence" value="ECO:0007669"/>
    <property type="project" value="UniProtKB-UniRule"/>
</dbReference>
<dbReference type="GO" id="GO:0003735">
    <property type="term" value="F:structural constituent of ribosome"/>
    <property type="evidence" value="ECO:0007669"/>
    <property type="project" value="InterPro"/>
</dbReference>
<dbReference type="GO" id="GO:0006412">
    <property type="term" value="P:translation"/>
    <property type="evidence" value="ECO:0007669"/>
    <property type="project" value="UniProtKB-UniRule"/>
</dbReference>
<dbReference type="CDD" id="cd00349">
    <property type="entry name" value="Ribosomal_L11"/>
    <property type="match status" value="1"/>
</dbReference>
<dbReference type="FunFam" id="1.10.10.250:FF:000001">
    <property type="entry name" value="50S ribosomal protein L11"/>
    <property type="match status" value="1"/>
</dbReference>
<dbReference type="FunFam" id="3.30.1550.10:FF:000001">
    <property type="entry name" value="50S ribosomal protein L11"/>
    <property type="match status" value="1"/>
</dbReference>
<dbReference type="Gene3D" id="1.10.10.250">
    <property type="entry name" value="Ribosomal protein L11, C-terminal domain"/>
    <property type="match status" value="1"/>
</dbReference>
<dbReference type="Gene3D" id="3.30.1550.10">
    <property type="entry name" value="Ribosomal protein L11/L12, N-terminal domain"/>
    <property type="match status" value="1"/>
</dbReference>
<dbReference type="HAMAP" id="MF_00736">
    <property type="entry name" value="Ribosomal_uL11"/>
    <property type="match status" value="1"/>
</dbReference>
<dbReference type="InterPro" id="IPR000911">
    <property type="entry name" value="Ribosomal_uL11"/>
</dbReference>
<dbReference type="InterPro" id="IPR006519">
    <property type="entry name" value="Ribosomal_uL11_bac-typ"/>
</dbReference>
<dbReference type="InterPro" id="IPR020783">
    <property type="entry name" value="Ribosomal_uL11_C"/>
</dbReference>
<dbReference type="InterPro" id="IPR036769">
    <property type="entry name" value="Ribosomal_uL11_C_sf"/>
</dbReference>
<dbReference type="InterPro" id="IPR020785">
    <property type="entry name" value="Ribosomal_uL11_CS"/>
</dbReference>
<dbReference type="InterPro" id="IPR020784">
    <property type="entry name" value="Ribosomal_uL11_N"/>
</dbReference>
<dbReference type="InterPro" id="IPR036796">
    <property type="entry name" value="Ribosomal_uL11_N_sf"/>
</dbReference>
<dbReference type="NCBIfam" id="TIGR01632">
    <property type="entry name" value="L11_bact"/>
    <property type="match status" value="1"/>
</dbReference>
<dbReference type="PANTHER" id="PTHR11661">
    <property type="entry name" value="60S RIBOSOMAL PROTEIN L12"/>
    <property type="match status" value="1"/>
</dbReference>
<dbReference type="PANTHER" id="PTHR11661:SF1">
    <property type="entry name" value="LARGE RIBOSOMAL SUBUNIT PROTEIN UL11M"/>
    <property type="match status" value="1"/>
</dbReference>
<dbReference type="Pfam" id="PF00298">
    <property type="entry name" value="Ribosomal_L11"/>
    <property type="match status" value="1"/>
</dbReference>
<dbReference type="Pfam" id="PF03946">
    <property type="entry name" value="Ribosomal_L11_N"/>
    <property type="match status" value="1"/>
</dbReference>
<dbReference type="SMART" id="SM00649">
    <property type="entry name" value="RL11"/>
    <property type="match status" value="1"/>
</dbReference>
<dbReference type="SUPFAM" id="SSF54747">
    <property type="entry name" value="Ribosomal L11/L12e N-terminal domain"/>
    <property type="match status" value="1"/>
</dbReference>
<dbReference type="SUPFAM" id="SSF46906">
    <property type="entry name" value="Ribosomal protein L11, C-terminal domain"/>
    <property type="match status" value="1"/>
</dbReference>
<dbReference type="PROSITE" id="PS00359">
    <property type="entry name" value="RIBOSOMAL_L11"/>
    <property type="match status" value="1"/>
</dbReference>
<proteinExistence type="inferred from homology"/>
<keyword id="KW-0488">Methylation</keyword>
<keyword id="KW-0687">Ribonucleoprotein</keyword>
<keyword id="KW-0689">Ribosomal protein</keyword>
<keyword id="KW-0694">RNA-binding</keyword>
<keyword id="KW-0699">rRNA-binding</keyword>